<name>RIHC_ECOK1</name>
<feature type="chain" id="PRO_1000024404" description="Non-specific ribonucleoside hydrolase RihC">
    <location>
        <begin position="1"/>
        <end position="304"/>
    </location>
</feature>
<feature type="active site" evidence="1">
    <location>
        <position position="233"/>
    </location>
</feature>
<organism>
    <name type="scientific">Escherichia coli O1:K1 / APEC</name>
    <dbReference type="NCBI Taxonomy" id="405955"/>
    <lineage>
        <taxon>Bacteria</taxon>
        <taxon>Pseudomonadati</taxon>
        <taxon>Pseudomonadota</taxon>
        <taxon>Gammaproteobacteria</taxon>
        <taxon>Enterobacterales</taxon>
        <taxon>Enterobacteriaceae</taxon>
        <taxon>Escherichia</taxon>
    </lineage>
</organism>
<dbReference type="EC" id="3.2.-.-" evidence="1"/>
<dbReference type="EMBL" id="CP000468">
    <property type="protein sequence ID" value="ABI99517.1"/>
    <property type="molecule type" value="Genomic_DNA"/>
</dbReference>
<dbReference type="RefSeq" id="WP_001239167.1">
    <property type="nucleotide sequence ID" value="NZ_CADILS010000013.1"/>
</dbReference>
<dbReference type="SMR" id="A1A778"/>
<dbReference type="KEGG" id="ecv:APECO1_1953"/>
<dbReference type="HOGENOM" id="CLU_036838_2_2_6"/>
<dbReference type="Proteomes" id="UP000008216">
    <property type="component" value="Chromosome"/>
</dbReference>
<dbReference type="GO" id="GO:0005829">
    <property type="term" value="C:cytosol"/>
    <property type="evidence" value="ECO:0007669"/>
    <property type="project" value="TreeGrafter"/>
</dbReference>
<dbReference type="GO" id="GO:0008477">
    <property type="term" value="F:purine nucleosidase activity"/>
    <property type="evidence" value="ECO:0007669"/>
    <property type="project" value="TreeGrafter"/>
</dbReference>
<dbReference type="GO" id="GO:0045437">
    <property type="term" value="F:uridine nucleosidase activity"/>
    <property type="evidence" value="ECO:0007669"/>
    <property type="project" value="UniProtKB-ARBA"/>
</dbReference>
<dbReference type="GO" id="GO:0006144">
    <property type="term" value="P:purine nucleobase metabolic process"/>
    <property type="evidence" value="ECO:0007669"/>
    <property type="project" value="UniProtKB-UniRule"/>
</dbReference>
<dbReference type="GO" id="GO:0006152">
    <property type="term" value="P:purine nucleoside catabolic process"/>
    <property type="evidence" value="ECO:0007669"/>
    <property type="project" value="TreeGrafter"/>
</dbReference>
<dbReference type="GO" id="GO:0006206">
    <property type="term" value="P:pyrimidine nucleobase metabolic process"/>
    <property type="evidence" value="ECO:0007669"/>
    <property type="project" value="UniProtKB-UniRule"/>
</dbReference>
<dbReference type="CDD" id="cd02651">
    <property type="entry name" value="nuc_hydro_IU_UC_XIUA"/>
    <property type="match status" value="1"/>
</dbReference>
<dbReference type="FunFam" id="3.90.245.10:FF:000002">
    <property type="entry name" value="Non-specific ribonucleoside hydrolase RihC"/>
    <property type="match status" value="1"/>
</dbReference>
<dbReference type="Gene3D" id="3.90.245.10">
    <property type="entry name" value="Ribonucleoside hydrolase-like"/>
    <property type="match status" value="1"/>
</dbReference>
<dbReference type="HAMAP" id="MF_01432">
    <property type="entry name" value="Nucleosid_hydro_RihC"/>
    <property type="match status" value="1"/>
</dbReference>
<dbReference type="InterPro" id="IPR015910">
    <property type="entry name" value="I/U_nuclsd_hydro_CS"/>
</dbReference>
<dbReference type="InterPro" id="IPR001910">
    <property type="entry name" value="Inosine/uridine_hydrolase_dom"/>
</dbReference>
<dbReference type="InterPro" id="IPR023186">
    <property type="entry name" value="IUNH"/>
</dbReference>
<dbReference type="InterPro" id="IPR022976">
    <property type="entry name" value="Nucleosid_hydro_RihC_nonspecif"/>
</dbReference>
<dbReference type="InterPro" id="IPR036452">
    <property type="entry name" value="Ribo_hydro-like"/>
</dbReference>
<dbReference type="NCBIfam" id="NF008036">
    <property type="entry name" value="PRK10768.1"/>
    <property type="match status" value="1"/>
</dbReference>
<dbReference type="PANTHER" id="PTHR12304">
    <property type="entry name" value="INOSINE-URIDINE PREFERRING NUCLEOSIDE HYDROLASE"/>
    <property type="match status" value="1"/>
</dbReference>
<dbReference type="PANTHER" id="PTHR12304:SF15">
    <property type="entry name" value="NON-SPECIFIC RIBONUCLEOSIDE HYDROLASE RIHC"/>
    <property type="match status" value="1"/>
</dbReference>
<dbReference type="Pfam" id="PF01156">
    <property type="entry name" value="IU_nuc_hydro"/>
    <property type="match status" value="1"/>
</dbReference>
<dbReference type="SUPFAM" id="SSF53590">
    <property type="entry name" value="Nucleoside hydrolase"/>
    <property type="match status" value="1"/>
</dbReference>
<dbReference type="PROSITE" id="PS01247">
    <property type="entry name" value="IUNH"/>
    <property type="match status" value="1"/>
</dbReference>
<reference key="1">
    <citation type="journal article" date="2007" name="J. Bacteriol.">
        <title>The genome sequence of avian pathogenic Escherichia coli strain O1:K1:H7 shares strong similarities with human extraintestinal pathogenic E. coli genomes.</title>
        <authorList>
            <person name="Johnson T.J."/>
            <person name="Kariyawasam S."/>
            <person name="Wannemuehler Y."/>
            <person name="Mangiamele P."/>
            <person name="Johnson S.J."/>
            <person name="Doetkott C."/>
            <person name="Skyberg J.A."/>
            <person name="Lynne A.M."/>
            <person name="Johnson J.R."/>
            <person name="Nolan L.K."/>
        </authorList>
    </citation>
    <scope>NUCLEOTIDE SEQUENCE [LARGE SCALE GENOMIC DNA]</scope>
</reference>
<comment type="function">
    <text evidence="1">Hydrolyzes both purine and pyrimidine ribonucleosides with a broad-substrate specificity.</text>
</comment>
<comment type="similarity">
    <text evidence="1">Belongs to the IUNH family. RihC subfamily.</text>
</comment>
<accession>A1A778</accession>
<sequence length="304" mass="32600">MRLPIFLDTDPGIDDAVAIAAAIFAPELDLQLMTTVAGNVSVEKTTRNALQLLHFWNVDIPLAQGAAVPLVRAPRDAASVHGESGMAGYDFVEHNRQPLGIPAFLAIRDALMRAPEPVTLVAIGPLTNIALLLSQCPECKPYIRRLVIMGGSAGRGNCTPNAEFNIAADPEAAACVFRSGIEIVMCGLDVTNQAILTPDYLATLPELNRTGKMLHALFSHYRSGSMQSGLRMHDLCAIAWLVRPELFTLKPCFVAVETQGEFTSGTTVVDIDGCLGKPANVQVALDLDVKGFQQWVAEVLALAL</sequence>
<evidence type="ECO:0000255" key="1">
    <source>
        <dbReference type="HAMAP-Rule" id="MF_01432"/>
    </source>
</evidence>
<gene>
    <name evidence="1" type="primary">rihC</name>
    <name type="ordered locus">Ecok1_00240</name>
    <name type="ORF">APECO1_1953</name>
</gene>
<protein>
    <recommendedName>
        <fullName evidence="1">Non-specific ribonucleoside hydrolase RihC</fullName>
        <ecNumber evidence="1">3.2.-.-</ecNumber>
    </recommendedName>
    <alternativeName>
        <fullName evidence="1">Purine/pyrimidine ribonucleoside hydrolase</fullName>
    </alternativeName>
</protein>
<keyword id="KW-0326">Glycosidase</keyword>
<keyword id="KW-0378">Hydrolase</keyword>
<keyword id="KW-1185">Reference proteome</keyword>
<proteinExistence type="inferred from homology"/>